<gene>
    <name evidence="1" type="primary">dsbB</name>
    <name type="ordered locus">Sde_3585</name>
</gene>
<keyword id="KW-0997">Cell inner membrane</keyword>
<keyword id="KW-1003">Cell membrane</keyword>
<keyword id="KW-0143">Chaperone</keyword>
<keyword id="KW-1015">Disulfide bond</keyword>
<keyword id="KW-0249">Electron transport</keyword>
<keyword id="KW-0472">Membrane</keyword>
<keyword id="KW-0560">Oxidoreductase</keyword>
<keyword id="KW-0676">Redox-active center</keyword>
<keyword id="KW-1185">Reference proteome</keyword>
<keyword id="KW-0812">Transmembrane</keyword>
<keyword id="KW-1133">Transmembrane helix</keyword>
<keyword id="KW-0813">Transport</keyword>
<reference key="1">
    <citation type="journal article" date="2008" name="PLoS Genet.">
        <title>Complete genome sequence of the complex carbohydrate-degrading marine bacterium, Saccharophagus degradans strain 2-40 T.</title>
        <authorList>
            <person name="Weiner R.M."/>
            <person name="Taylor L.E. II"/>
            <person name="Henrissat B."/>
            <person name="Hauser L."/>
            <person name="Land M."/>
            <person name="Coutinho P.M."/>
            <person name="Rancurel C."/>
            <person name="Saunders E.H."/>
            <person name="Longmire A.G."/>
            <person name="Zhang H."/>
            <person name="Bayer E.A."/>
            <person name="Gilbert H.J."/>
            <person name="Larimer F."/>
            <person name="Zhulin I.B."/>
            <person name="Ekborg N.A."/>
            <person name="Lamed R."/>
            <person name="Richardson P.M."/>
            <person name="Borovok I."/>
            <person name="Hutcheson S."/>
        </authorList>
    </citation>
    <scope>NUCLEOTIDE SEQUENCE [LARGE SCALE GENOMIC DNA]</scope>
    <source>
        <strain>2-40 / ATCC 43961 / DSM 17024</strain>
    </source>
</reference>
<dbReference type="EMBL" id="CP000282">
    <property type="protein sequence ID" value="ABD82840.1"/>
    <property type="molecule type" value="Genomic_DNA"/>
</dbReference>
<dbReference type="RefSeq" id="WP_011470055.1">
    <property type="nucleotide sequence ID" value="NC_007912.1"/>
</dbReference>
<dbReference type="SMR" id="Q21EN9"/>
<dbReference type="STRING" id="203122.Sde_3585"/>
<dbReference type="GeneID" id="98615196"/>
<dbReference type="KEGG" id="sde:Sde_3585"/>
<dbReference type="eggNOG" id="COG1495">
    <property type="taxonomic scope" value="Bacteria"/>
</dbReference>
<dbReference type="HOGENOM" id="CLU_098660_1_1_6"/>
<dbReference type="OrthoDB" id="3711263at2"/>
<dbReference type="Proteomes" id="UP000001947">
    <property type="component" value="Chromosome"/>
</dbReference>
<dbReference type="GO" id="GO:0005886">
    <property type="term" value="C:plasma membrane"/>
    <property type="evidence" value="ECO:0007669"/>
    <property type="project" value="UniProtKB-SubCell"/>
</dbReference>
<dbReference type="GO" id="GO:0009055">
    <property type="term" value="F:electron transfer activity"/>
    <property type="evidence" value="ECO:0007669"/>
    <property type="project" value="UniProtKB-UniRule"/>
</dbReference>
<dbReference type="GO" id="GO:0015035">
    <property type="term" value="F:protein-disulfide reductase activity"/>
    <property type="evidence" value="ECO:0007669"/>
    <property type="project" value="UniProtKB-UniRule"/>
</dbReference>
<dbReference type="GO" id="GO:0006457">
    <property type="term" value="P:protein folding"/>
    <property type="evidence" value="ECO:0007669"/>
    <property type="project" value="InterPro"/>
</dbReference>
<dbReference type="Gene3D" id="1.20.1550.10">
    <property type="entry name" value="DsbB-like"/>
    <property type="match status" value="1"/>
</dbReference>
<dbReference type="HAMAP" id="MF_00286">
    <property type="entry name" value="DsbB"/>
    <property type="match status" value="1"/>
</dbReference>
<dbReference type="InterPro" id="IPR003752">
    <property type="entry name" value="DiS_bond_form_DsbB/BdbC"/>
</dbReference>
<dbReference type="InterPro" id="IPR022920">
    <property type="entry name" value="Disulphide_bond_form_DsbB"/>
</dbReference>
<dbReference type="InterPro" id="IPR050183">
    <property type="entry name" value="DsbB"/>
</dbReference>
<dbReference type="InterPro" id="IPR023380">
    <property type="entry name" value="DsbB-like_sf"/>
</dbReference>
<dbReference type="PANTHER" id="PTHR36570">
    <property type="entry name" value="DISULFIDE BOND FORMATION PROTEIN B"/>
    <property type="match status" value="1"/>
</dbReference>
<dbReference type="PANTHER" id="PTHR36570:SF3">
    <property type="entry name" value="DISULFIDE BOND FORMATION PROTEIN B"/>
    <property type="match status" value="1"/>
</dbReference>
<dbReference type="Pfam" id="PF02600">
    <property type="entry name" value="DsbB"/>
    <property type="match status" value="1"/>
</dbReference>
<dbReference type="SUPFAM" id="SSF158442">
    <property type="entry name" value="DsbB-like"/>
    <property type="match status" value="1"/>
</dbReference>
<evidence type="ECO:0000255" key="1">
    <source>
        <dbReference type="HAMAP-Rule" id="MF_00286"/>
    </source>
</evidence>
<sequence>MKITKLPSYRQTALIIFAGCVGLILAALYMQEVLGLHPCPLCITQRIFIIGVGLISLIAAIHNPAALGRKVYGCLATLSGVIGAGVSARHVWLQNLPEDQVPACGPDLAYMFDAFPLLDALKLLFAGDGNCADVVASFLGLSIPGWTFVAFVGLIAISVWQGLRKA</sequence>
<protein>
    <recommendedName>
        <fullName evidence="1">Disulfide bond formation protein B</fullName>
    </recommendedName>
    <alternativeName>
        <fullName evidence="1">Disulfide oxidoreductase</fullName>
    </alternativeName>
</protein>
<name>DSBB_SACD2</name>
<comment type="function">
    <text evidence="1">Required for disulfide bond formation in some periplasmic proteins. Acts by oxidizing the DsbA protein.</text>
</comment>
<comment type="subcellular location">
    <subcellularLocation>
        <location evidence="1">Cell inner membrane</location>
        <topology evidence="1">Multi-pass membrane protein</topology>
    </subcellularLocation>
</comment>
<comment type="similarity">
    <text evidence="1">Belongs to the DsbB family.</text>
</comment>
<organism>
    <name type="scientific">Saccharophagus degradans (strain 2-40 / ATCC 43961 / DSM 17024)</name>
    <dbReference type="NCBI Taxonomy" id="203122"/>
    <lineage>
        <taxon>Bacteria</taxon>
        <taxon>Pseudomonadati</taxon>
        <taxon>Pseudomonadota</taxon>
        <taxon>Gammaproteobacteria</taxon>
        <taxon>Cellvibrionales</taxon>
        <taxon>Cellvibrionaceae</taxon>
        <taxon>Saccharophagus</taxon>
    </lineage>
</organism>
<feature type="chain" id="PRO_0000298403" description="Disulfide bond formation protein B">
    <location>
        <begin position="1"/>
        <end position="166"/>
    </location>
</feature>
<feature type="topological domain" description="Cytoplasmic" evidence="1">
    <location>
        <begin position="1"/>
        <end position="12"/>
    </location>
</feature>
<feature type="transmembrane region" description="Helical" evidence="1">
    <location>
        <begin position="13"/>
        <end position="29"/>
    </location>
</feature>
<feature type="topological domain" description="Periplasmic" evidence="1">
    <location>
        <begin position="30"/>
        <end position="47"/>
    </location>
</feature>
<feature type="transmembrane region" description="Helical" evidence="1">
    <location>
        <begin position="48"/>
        <end position="64"/>
    </location>
</feature>
<feature type="topological domain" description="Cytoplasmic" evidence="1">
    <location>
        <begin position="65"/>
        <end position="70"/>
    </location>
</feature>
<feature type="transmembrane region" description="Helical" evidence="1">
    <location>
        <begin position="71"/>
        <end position="88"/>
    </location>
</feature>
<feature type="topological domain" description="Periplasmic" evidence="1">
    <location>
        <begin position="89"/>
        <end position="145"/>
    </location>
</feature>
<feature type="transmembrane region" description="Helical" evidence="1">
    <location>
        <begin position="146"/>
        <end position="164"/>
    </location>
</feature>
<feature type="topological domain" description="Cytoplasmic" evidence="1">
    <location>
        <begin position="165"/>
        <end position="166"/>
    </location>
</feature>
<feature type="disulfide bond" description="Redox-active" evidence="1">
    <location>
        <begin position="39"/>
        <end position="42"/>
    </location>
</feature>
<feature type="disulfide bond" description="Redox-active" evidence="1">
    <location>
        <begin position="104"/>
        <end position="131"/>
    </location>
</feature>
<proteinExistence type="inferred from homology"/>
<accession>Q21EN9</accession>